<proteinExistence type="inferred from homology"/>
<organism>
    <name type="scientific">Stutzerimonas stutzeri (strain A1501)</name>
    <name type="common">Pseudomonas stutzeri</name>
    <dbReference type="NCBI Taxonomy" id="379731"/>
    <lineage>
        <taxon>Bacteria</taxon>
        <taxon>Pseudomonadati</taxon>
        <taxon>Pseudomonadota</taxon>
        <taxon>Gammaproteobacteria</taxon>
        <taxon>Pseudomonadales</taxon>
        <taxon>Pseudomonadaceae</taxon>
        <taxon>Stutzerimonas</taxon>
    </lineage>
</organism>
<dbReference type="EMBL" id="CP000304">
    <property type="protein sequence ID" value="ABP78460.1"/>
    <property type="molecule type" value="Genomic_DNA"/>
</dbReference>
<dbReference type="RefSeq" id="WP_011911967.1">
    <property type="nucleotide sequence ID" value="NC_009434.1"/>
</dbReference>
<dbReference type="SMR" id="A4VHK9"/>
<dbReference type="GeneID" id="66819896"/>
<dbReference type="KEGG" id="psa:PST_0755"/>
<dbReference type="eggNOG" id="COG0316">
    <property type="taxonomic scope" value="Bacteria"/>
</dbReference>
<dbReference type="HOGENOM" id="CLU_069054_5_3_6"/>
<dbReference type="Proteomes" id="UP000000233">
    <property type="component" value="Chromosome"/>
</dbReference>
<dbReference type="GO" id="GO:0005829">
    <property type="term" value="C:cytosol"/>
    <property type="evidence" value="ECO:0007669"/>
    <property type="project" value="TreeGrafter"/>
</dbReference>
<dbReference type="GO" id="GO:0051537">
    <property type="term" value="F:2 iron, 2 sulfur cluster binding"/>
    <property type="evidence" value="ECO:0007669"/>
    <property type="project" value="TreeGrafter"/>
</dbReference>
<dbReference type="GO" id="GO:0051539">
    <property type="term" value="F:4 iron, 4 sulfur cluster binding"/>
    <property type="evidence" value="ECO:0007669"/>
    <property type="project" value="TreeGrafter"/>
</dbReference>
<dbReference type="GO" id="GO:0005506">
    <property type="term" value="F:iron ion binding"/>
    <property type="evidence" value="ECO:0007669"/>
    <property type="project" value="UniProtKB-UniRule"/>
</dbReference>
<dbReference type="GO" id="GO:0016226">
    <property type="term" value="P:iron-sulfur cluster assembly"/>
    <property type="evidence" value="ECO:0007669"/>
    <property type="project" value="UniProtKB-UniRule"/>
</dbReference>
<dbReference type="FunFam" id="2.60.300.12:FF:000002">
    <property type="entry name" value="Iron-sulfur cluster insertion protein ErpA"/>
    <property type="match status" value="1"/>
</dbReference>
<dbReference type="Gene3D" id="2.60.300.12">
    <property type="entry name" value="HesB-like domain"/>
    <property type="match status" value="1"/>
</dbReference>
<dbReference type="HAMAP" id="MF_01380">
    <property type="entry name" value="Fe_S_insert_ErpA"/>
    <property type="match status" value="1"/>
</dbReference>
<dbReference type="InterPro" id="IPR000361">
    <property type="entry name" value="FeS_biogenesis"/>
</dbReference>
<dbReference type="InterPro" id="IPR016092">
    <property type="entry name" value="FeS_cluster_insertion"/>
</dbReference>
<dbReference type="InterPro" id="IPR017870">
    <property type="entry name" value="FeS_cluster_insertion_CS"/>
</dbReference>
<dbReference type="InterPro" id="IPR023063">
    <property type="entry name" value="FeS_cluster_insertion_RrpA"/>
</dbReference>
<dbReference type="InterPro" id="IPR035903">
    <property type="entry name" value="HesB-like_dom_sf"/>
</dbReference>
<dbReference type="NCBIfam" id="TIGR00049">
    <property type="entry name" value="iron-sulfur cluster assembly accessory protein"/>
    <property type="match status" value="1"/>
</dbReference>
<dbReference type="NCBIfam" id="NF010147">
    <property type="entry name" value="PRK13623.1"/>
    <property type="match status" value="1"/>
</dbReference>
<dbReference type="PANTHER" id="PTHR43011">
    <property type="entry name" value="IRON-SULFUR CLUSTER ASSEMBLY 2 HOMOLOG, MITOCHONDRIAL"/>
    <property type="match status" value="1"/>
</dbReference>
<dbReference type="PANTHER" id="PTHR43011:SF1">
    <property type="entry name" value="IRON-SULFUR CLUSTER ASSEMBLY 2 HOMOLOG, MITOCHONDRIAL"/>
    <property type="match status" value="1"/>
</dbReference>
<dbReference type="Pfam" id="PF01521">
    <property type="entry name" value="Fe-S_biosyn"/>
    <property type="match status" value="1"/>
</dbReference>
<dbReference type="SUPFAM" id="SSF89360">
    <property type="entry name" value="HesB-like domain"/>
    <property type="match status" value="1"/>
</dbReference>
<dbReference type="PROSITE" id="PS01152">
    <property type="entry name" value="HESB"/>
    <property type="match status" value="1"/>
</dbReference>
<evidence type="ECO:0000255" key="1">
    <source>
        <dbReference type="HAMAP-Rule" id="MF_01380"/>
    </source>
</evidence>
<comment type="function">
    <text evidence="1">Required for insertion of 4Fe-4S clusters for at least IspG.</text>
</comment>
<comment type="cofactor">
    <cofactor evidence="1">
        <name>iron-sulfur cluster</name>
        <dbReference type="ChEBI" id="CHEBI:30408"/>
    </cofactor>
    <text evidence="1">Binds 1 iron-sulfur cluster per subunit.</text>
</comment>
<comment type="subunit">
    <text evidence="1">Homodimer.</text>
</comment>
<comment type="similarity">
    <text evidence="1">Belongs to the HesB/IscA family.</text>
</comment>
<feature type="chain" id="PRO_0000311529" description="Iron-sulfur cluster insertion protein ErpA">
    <location>
        <begin position="1"/>
        <end position="116"/>
    </location>
</feature>
<feature type="binding site" evidence="1">
    <location>
        <position position="44"/>
    </location>
    <ligand>
        <name>iron-sulfur cluster</name>
        <dbReference type="ChEBI" id="CHEBI:30408"/>
    </ligand>
</feature>
<feature type="binding site" evidence="1">
    <location>
        <position position="108"/>
    </location>
    <ligand>
        <name>iron-sulfur cluster</name>
        <dbReference type="ChEBI" id="CHEBI:30408"/>
    </ligand>
</feature>
<feature type="binding site" evidence="1">
    <location>
        <position position="110"/>
    </location>
    <ligand>
        <name>iron-sulfur cluster</name>
        <dbReference type="ChEBI" id="CHEBI:30408"/>
    </ligand>
</feature>
<name>ERPA_STUS1</name>
<reference key="1">
    <citation type="journal article" date="2008" name="Proc. Natl. Acad. Sci. U.S.A.">
        <title>Nitrogen fixation island and rhizosphere competence traits in the genome of root-associated Pseudomonas stutzeri A1501.</title>
        <authorList>
            <person name="Yan Y."/>
            <person name="Yang J."/>
            <person name="Dou Y."/>
            <person name="Chen M."/>
            <person name="Ping S."/>
            <person name="Peng J."/>
            <person name="Lu W."/>
            <person name="Zhang W."/>
            <person name="Yao Z."/>
            <person name="Li H."/>
            <person name="Liu W."/>
            <person name="He S."/>
            <person name="Geng L."/>
            <person name="Zhang X."/>
            <person name="Yang F."/>
            <person name="Yu H."/>
            <person name="Zhan Y."/>
            <person name="Li D."/>
            <person name="Lin Z."/>
            <person name="Wang Y."/>
            <person name="Elmerich C."/>
            <person name="Lin M."/>
            <person name="Jin Q."/>
        </authorList>
    </citation>
    <scope>NUCLEOTIDE SEQUENCE [LARGE SCALE GENOMIC DNA]</scope>
    <source>
        <strain>A1501</strain>
    </source>
</reference>
<gene>
    <name evidence="1" type="primary">erpA</name>
    <name type="ordered locus">PST_0755</name>
</gene>
<protein>
    <recommendedName>
        <fullName evidence="1">Iron-sulfur cluster insertion protein ErpA</fullName>
    </recommendedName>
</protein>
<sequence length="116" mass="12467">MSVESFTPTAIQFSQGAASKVKSLVDEEGNPRLKLRVFVTGGGCSGFQYGFTFDEDVADDDTVIEREGVSLVVDPMSYQYLAGAEVDYQEGLEGSRFVIKNPNATTTCGCGQSFSI</sequence>
<accession>A4VHK9</accession>
<keyword id="KW-0408">Iron</keyword>
<keyword id="KW-0411">Iron-sulfur</keyword>
<keyword id="KW-0479">Metal-binding</keyword>
<keyword id="KW-1185">Reference proteome</keyword>